<comment type="catalytic activity">
    <reaction evidence="1">
        <text>alpha-D-xylose = alpha-D-xylulofuranose</text>
        <dbReference type="Rhea" id="RHEA:22816"/>
        <dbReference type="ChEBI" id="CHEBI:28518"/>
        <dbReference type="ChEBI" id="CHEBI:188998"/>
        <dbReference type="EC" id="5.3.1.5"/>
    </reaction>
</comment>
<comment type="cofactor">
    <cofactor evidence="1">
        <name>Mg(2+)</name>
        <dbReference type="ChEBI" id="CHEBI:18420"/>
    </cofactor>
    <text evidence="1">Binds 2 magnesium ions per subunit.</text>
</comment>
<comment type="subunit">
    <text evidence="1">Homotetramer.</text>
</comment>
<comment type="subcellular location">
    <subcellularLocation>
        <location evidence="1">Cytoplasm</location>
    </subcellularLocation>
</comment>
<comment type="similarity">
    <text evidence="1">Belongs to the xylose isomerase family.</text>
</comment>
<gene>
    <name evidence="1" type="primary">xylA</name>
    <name type="ordered locus">plu2275</name>
</gene>
<organism>
    <name type="scientific">Photorhabdus laumondii subsp. laumondii (strain DSM 15139 / CIP 105565 / TT01)</name>
    <name type="common">Photorhabdus luminescens subsp. laumondii</name>
    <dbReference type="NCBI Taxonomy" id="243265"/>
    <lineage>
        <taxon>Bacteria</taxon>
        <taxon>Pseudomonadati</taxon>
        <taxon>Pseudomonadota</taxon>
        <taxon>Gammaproteobacteria</taxon>
        <taxon>Enterobacterales</taxon>
        <taxon>Morganellaceae</taxon>
        <taxon>Photorhabdus</taxon>
    </lineage>
</organism>
<name>XYLA_PHOLL</name>
<dbReference type="EC" id="5.3.1.5" evidence="1"/>
<dbReference type="EMBL" id="BX571866">
    <property type="protein sequence ID" value="CAE14568.1"/>
    <property type="molecule type" value="Genomic_DNA"/>
</dbReference>
<dbReference type="RefSeq" id="WP_011146524.1">
    <property type="nucleotide sequence ID" value="NC_005126.1"/>
</dbReference>
<dbReference type="SMR" id="Q7N4P7"/>
<dbReference type="STRING" id="243265.plu2275"/>
<dbReference type="GeneID" id="48848551"/>
<dbReference type="KEGG" id="plu:plu2275"/>
<dbReference type="eggNOG" id="COG2115">
    <property type="taxonomic scope" value="Bacteria"/>
</dbReference>
<dbReference type="HOGENOM" id="CLU_037261_1_0_6"/>
<dbReference type="OrthoDB" id="9763981at2"/>
<dbReference type="Proteomes" id="UP000002514">
    <property type="component" value="Chromosome"/>
</dbReference>
<dbReference type="GO" id="GO:0005737">
    <property type="term" value="C:cytoplasm"/>
    <property type="evidence" value="ECO:0007669"/>
    <property type="project" value="UniProtKB-SubCell"/>
</dbReference>
<dbReference type="GO" id="GO:0000287">
    <property type="term" value="F:magnesium ion binding"/>
    <property type="evidence" value="ECO:0007669"/>
    <property type="project" value="UniProtKB-UniRule"/>
</dbReference>
<dbReference type="GO" id="GO:0009045">
    <property type="term" value="F:xylose isomerase activity"/>
    <property type="evidence" value="ECO:0007669"/>
    <property type="project" value="UniProtKB-UniRule"/>
</dbReference>
<dbReference type="GO" id="GO:0042732">
    <property type="term" value="P:D-xylose metabolic process"/>
    <property type="evidence" value="ECO:0007669"/>
    <property type="project" value="UniProtKB-UniRule"/>
</dbReference>
<dbReference type="FunFam" id="3.20.20.150:FF:000002">
    <property type="entry name" value="Xylose isomerase"/>
    <property type="match status" value="1"/>
</dbReference>
<dbReference type="Gene3D" id="3.20.20.150">
    <property type="entry name" value="Divalent-metal-dependent TIM barrel enzymes"/>
    <property type="match status" value="1"/>
</dbReference>
<dbReference type="HAMAP" id="MF_00455">
    <property type="entry name" value="Xylose_isom_A"/>
    <property type="match status" value="1"/>
</dbReference>
<dbReference type="InterPro" id="IPR036237">
    <property type="entry name" value="Xyl_isomerase-like_sf"/>
</dbReference>
<dbReference type="InterPro" id="IPR013452">
    <property type="entry name" value="Xylose_isom_bac"/>
</dbReference>
<dbReference type="InterPro" id="IPR001998">
    <property type="entry name" value="Xylose_isomerase"/>
</dbReference>
<dbReference type="NCBIfam" id="NF003998">
    <property type="entry name" value="PRK05474.1"/>
    <property type="match status" value="1"/>
</dbReference>
<dbReference type="NCBIfam" id="TIGR02630">
    <property type="entry name" value="xylose_isom_A"/>
    <property type="match status" value="1"/>
</dbReference>
<dbReference type="PANTHER" id="PTHR48408">
    <property type="match status" value="1"/>
</dbReference>
<dbReference type="PANTHER" id="PTHR48408:SF1">
    <property type="entry name" value="XYLOSE ISOMERASE"/>
    <property type="match status" value="1"/>
</dbReference>
<dbReference type="PRINTS" id="PR00688">
    <property type="entry name" value="XYLOSISMRASE"/>
</dbReference>
<dbReference type="SUPFAM" id="SSF51658">
    <property type="entry name" value="Xylose isomerase-like"/>
    <property type="match status" value="1"/>
</dbReference>
<dbReference type="PROSITE" id="PS51415">
    <property type="entry name" value="XYLOSE_ISOMERASE"/>
    <property type="match status" value="1"/>
</dbReference>
<proteinExistence type="inferred from homology"/>
<sequence>MHRYFERVNRISYEGRQSNNPLAFRHYNPEEIILGKKMKDHLRFAVCYWHNFCWDGTDMFGSGAFERFWQKGGDALELAKLKADVAFEFFYKLNIPFYCFHDIDVAPEGCSLKEYIYNLGVMSDILADKQAETGVKLLWGTANCFTHPRYAAGASTNPDLNIFAYASAQVCQVMQMTKKLGGENYVLWGGREGYESLLNTDLRQEREQIGRFMQMVVDYKYKIGFQGTLLIEPKPQEPTKHQYDYDVATVYGFLKQFGLENEIKVNIEANHATLAGHSFQHEVATAIALGILGSIDANRGDAQLGWDTDQFPNSVEENSLVMYEILKAGGFTTGGLNFDAKVRRQSIDIDDLFYGHIGAIDTMALSLKSAVKILVDGKLDEYVAQRYSGWNSELGRDILEGKMTLDEVAHYAETLVQEPKHRSGQQELLENLINRYIYD</sequence>
<protein>
    <recommendedName>
        <fullName evidence="1">Xylose isomerase</fullName>
        <ecNumber evidence="1">5.3.1.5</ecNumber>
    </recommendedName>
</protein>
<keyword id="KW-0119">Carbohydrate metabolism</keyword>
<keyword id="KW-0963">Cytoplasm</keyword>
<keyword id="KW-0413">Isomerase</keyword>
<keyword id="KW-0460">Magnesium</keyword>
<keyword id="KW-0479">Metal-binding</keyword>
<keyword id="KW-1185">Reference proteome</keyword>
<keyword id="KW-0859">Xylose metabolism</keyword>
<feature type="chain" id="PRO_0000195785" description="Xylose isomerase">
    <location>
        <begin position="1"/>
        <end position="439"/>
    </location>
</feature>
<feature type="active site" evidence="1">
    <location>
        <position position="101"/>
    </location>
</feature>
<feature type="active site" evidence="1">
    <location>
        <position position="104"/>
    </location>
</feature>
<feature type="binding site" evidence="1">
    <location>
        <position position="232"/>
    </location>
    <ligand>
        <name>Mg(2+)</name>
        <dbReference type="ChEBI" id="CHEBI:18420"/>
        <label>1</label>
    </ligand>
</feature>
<feature type="binding site" evidence="1">
    <location>
        <position position="268"/>
    </location>
    <ligand>
        <name>Mg(2+)</name>
        <dbReference type="ChEBI" id="CHEBI:18420"/>
        <label>1</label>
    </ligand>
</feature>
<feature type="binding site" evidence="1">
    <location>
        <position position="268"/>
    </location>
    <ligand>
        <name>Mg(2+)</name>
        <dbReference type="ChEBI" id="CHEBI:18420"/>
        <label>2</label>
    </ligand>
</feature>
<feature type="binding site" evidence="1">
    <location>
        <position position="271"/>
    </location>
    <ligand>
        <name>Mg(2+)</name>
        <dbReference type="ChEBI" id="CHEBI:18420"/>
        <label>2</label>
    </ligand>
</feature>
<feature type="binding site" evidence="1">
    <location>
        <position position="296"/>
    </location>
    <ligand>
        <name>Mg(2+)</name>
        <dbReference type="ChEBI" id="CHEBI:18420"/>
        <label>1</label>
    </ligand>
</feature>
<feature type="binding site" evidence="1">
    <location>
        <position position="307"/>
    </location>
    <ligand>
        <name>Mg(2+)</name>
        <dbReference type="ChEBI" id="CHEBI:18420"/>
        <label>2</label>
    </ligand>
</feature>
<feature type="binding site" evidence="1">
    <location>
        <position position="309"/>
    </location>
    <ligand>
        <name>Mg(2+)</name>
        <dbReference type="ChEBI" id="CHEBI:18420"/>
        <label>2</label>
    </ligand>
</feature>
<feature type="binding site" evidence="1">
    <location>
        <position position="339"/>
    </location>
    <ligand>
        <name>Mg(2+)</name>
        <dbReference type="ChEBI" id="CHEBI:18420"/>
        <label>1</label>
    </ligand>
</feature>
<accession>Q7N4P7</accession>
<reference key="1">
    <citation type="journal article" date="2003" name="Nat. Biotechnol.">
        <title>The genome sequence of the entomopathogenic bacterium Photorhabdus luminescens.</title>
        <authorList>
            <person name="Duchaud E."/>
            <person name="Rusniok C."/>
            <person name="Frangeul L."/>
            <person name="Buchrieser C."/>
            <person name="Givaudan A."/>
            <person name="Taourit S."/>
            <person name="Bocs S."/>
            <person name="Boursaux-Eude C."/>
            <person name="Chandler M."/>
            <person name="Charles J.-F."/>
            <person name="Dassa E."/>
            <person name="Derose R."/>
            <person name="Derzelle S."/>
            <person name="Freyssinet G."/>
            <person name="Gaudriault S."/>
            <person name="Medigue C."/>
            <person name="Lanois A."/>
            <person name="Powell K."/>
            <person name="Siguier P."/>
            <person name="Vincent R."/>
            <person name="Wingate V."/>
            <person name="Zouine M."/>
            <person name="Glaser P."/>
            <person name="Boemare N."/>
            <person name="Danchin A."/>
            <person name="Kunst F."/>
        </authorList>
    </citation>
    <scope>NUCLEOTIDE SEQUENCE [LARGE SCALE GENOMIC DNA]</scope>
    <source>
        <strain>DSM 15139 / CIP 105565 / TT01</strain>
    </source>
</reference>
<evidence type="ECO:0000255" key="1">
    <source>
        <dbReference type="HAMAP-Rule" id="MF_00455"/>
    </source>
</evidence>